<organism>
    <name type="scientific">Trichophyton soudanense</name>
    <dbReference type="NCBI Taxonomy" id="69891"/>
    <lineage>
        <taxon>Eukaryota</taxon>
        <taxon>Fungi</taxon>
        <taxon>Dikarya</taxon>
        <taxon>Ascomycota</taxon>
        <taxon>Pezizomycotina</taxon>
        <taxon>Eurotiomycetes</taxon>
        <taxon>Eurotiomycetidae</taxon>
        <taxon>Onygenales</taxon>
        <taxon>Arthrodermataceae</taxon>
        <taxon>Trichophyton</taxon>
    </lineage>
</organism>
<name>MEP3_TRISD</name>
<gene>
    <name type="primary">MEP3</name>
</gene>
<protein>
    <recommendedName>
        <fullName>Extracellular metalloproteinase 3</fullName>
        <ecNumber>3.4.24.-</ecNumber>
    </recommendedName>
    <alternativeName>
        <fullName>Fungalysin MEP3</fullName>
    </alternativeName>
</protein>
<dbReference type="EC" id="3.4.24.-"/>
<dbReference type="EMBL" id="DQ384951">
    <property type="protein sequence ID" value="ABL84986.1"/>
    <property type="molecule type" value="Genomic_DNA"/>
</dbReference>
<dbReference type="EMBL" id="DQ409178">
    <property type="protein sequence ID" value="ABL84990.1"/>
    <property type="molecule type" value="Genomic_DNA"/>
</dbReference>
<dbReference type="SMR" id="A1XIM1"/>
<dbReference type="MEROPS" id="M36.001"/>
<dbReference type="GlyCosmos" id="A1XIM1">
    <property type="glycosylation" value="3 sites, No reported glycans"/>
</dbReference>
<dbReference type="GO" id="GO:0005576">
    <property type="term" value="C:extracellular region"/>
    <property type="evidence" value="ECO:0007669"/>
    <property type="project" value="UniProtKB-SubCell"/>
</dbReference>
<dbReference type="GO" id="GO:0004222">
    <property type="term" value="F:metalloendopeptidase activity"/>
    <property type="evidence" value="ECO:0007669"/>
    <property type="project" value="InterPro"/>
</dbReference>
<dbReference type="GO" id="GO:0008270">
    <property type="term" value="F:zinc ion binding"/>
    <property type="evidence" value="ECO:0007669"/>
    <property type="project" value="InterPro"/>
</dbReference>
<dbReference type="GO" id="GO:0006508">
    <property type="term" value="P:proteolysis"/>
    <property type="evidence" value="ECO:0007669"/>
    <property type="project" value="UniProtKB-KW"/>
</dbReference>
<dbReference type="CDD" id="cd09596">
    <property type="entry name" value="M36"/>
    <property type="match status" value="1"/>
</dbReference>
<dbReference type="Gene3D" id="3.10.170.10">
    <property type="match status" value="1"/>
</dbReference>
<dbReference type="Gene3D" id="1.10.390.10">
    <property type="entry name" value="Neutral Protease Domain 2"/>
    <property type="match status" value="1"/>
</dbReference>
<dbReference type="InterPro" id="IPR050371">
    <property type="entry name" value="Fungal_virulence_M36"/>
</dbReference>
<dbReference type="InterPro" id="IPR001842">
    <property type="entry name" value="Peptidase_M36"/>
</dbReference>
<dbReference type="InterPro" id="IPR027268">
    <property type="entry name" value="Peptidase_M4/M1_CTD_sf"/>
</dbReference>
<dbReference type="PANTHER" id="PTHR33478">
    <property type="entry name" value="EXTRACELLULAR METALLOPROTEINASE MEP"/>
    <property type="match status" value="1"/>
</dbReference>
<dbReference type="PANTHER" id="PTHR33478:SF1">
    <property type="entry name" value="EXTRACELLULAR METALLOPROTEINASE MEP"/>
    <property type="match status" value="1"/>
</dbReference>
<dbReference type="Pfam" id="PF02128">
    <property type="entry name" value="Peptidase_M36"/>
    <property type="match status" value="1"/>
</dbReference>
<dbReference type="PRINTS" id="PR00999">
    <property type="entry name" value="FUNGALYSIN"/>
</dbReference>
<dbReference type="SUPFAM" id="SSF55486">
    <property type="entry name" value="Metalloproteases ('zincins'), catalytic domain"/>
    <property type="match status" value="1"/>
</dbReference>
<dbReference type="PROSITE" id="PS00142">
    <property type="entry name" value="ZINC_PROTEASE"/>
    <property type="match status" value="1"/>
</dbReference>
<feature type="propeptide" id="PRO_0000380854" evidence="1">
    <location>
        <begin position="1" status="less than"/>
        <end position="9"/>
    </location>
</feature>
<feature type="chain" id="PRO_0000380855" description="Extracellular metalloproteinase 3">
    <location>
        <begin position="10"/>
        <end position="391" status="greater than"/>
    </location>
</feature>
<feature type="active site" evidence="3">
    <location>
        <position position="193"/>
    </location>
</feature>
<feature type="binding site" evidence="3">
    <location>
        <position position="192"/>
    </location>
    <ligand>
        <name>Zn(2+)</name>
        <dbReference type="ChEBI" id="CHEBI:29105"/>
        <note>catalytic</note>
    </ligand>
</feature>
<feature type="binding site" evidence="3">
    <location>
        <position position="196"/>
    </location>
    <ligand>
        <name>Zn(2+)</name>
        <dbReference type="ChEBI" id="CHEBI:29105"/>
        <note>catalytic</note>
    </ligand>
</feature>
<feature type="glycosylation site" description="N-linked (GlcNAc...) asparagine" evidence="2">
    <location>
        <position position="173"/>
    </location>
</feature>
<feature type="glycosylation site" description="N-linked (GlcNAc...) asparagine" evidence="2">
    <location>
        <position position="243"/>
    </location>
</feature>
<feature type="glycosylation site" description="N-linked (GlcNAc...) asparagine" evidence="2">
    <location>
        <position position="385"/>
    </location>
</feature>
<feature type="non-terminal residue">
    <location>
        <position position="1"/>
    </location>
</feature>
<feature type="non-terminal residue">
    <location>
        <position position="391"/>
    </location>
</feature>
<sequence>HNVVDYVASAEYKVFAWGLNDPTEGNPTSIRDPWTDASPYTWNSDGMSKYPTTRGNNAIAQDNPTGGSTYINNYRPQSPNLIFSYPWSPTATPPSSYKDFSITQLFYTTNRYHDLLYSFGFNEAAGNFQVNNGNKGGKGNDFAIVNAQDGSGTNNANFATPPDGSPGRMRMYNWTTARPNRDGCLEAGIVIHEYTHGLSNRLCGGPANSACLNALESGGMGEGWGDFYATAIRLKPRDTKNTNYSMGAWAANNPKGIRAYLYSTNLQTNPYMYTSVNSLREVHQIGTVWASMLYDLMWALIEAHGGTYSANPVFRNGVPQDGRHLSMKLVMDGMALQPCNPNFVQARDAILDADRALTNSANKCTIWKAFAKRGLGYGAKYDARNRTGSNK</sequence>
<reference key="1">
    <citation type="journal article" date="2007" name="FEMS Microbiol. Lett.">
        <title>Closely related dermatophyte species produce different patterns of secreted proteins.</title>
        <authorList>
            <person name="Giddey K."/>
            <person name="Favre B."/>
            <person name="Quadroni M."/>
            <person name="Monod M."/>
        </authorList>
    </citation>
    <scope>NUCLEOTIDE SEQUENCE [GENOMIC DNA]</scope>
    <scope>IDENTIFICATION BY MASS SPECTROMETRY</scope>
    <scope>SUBCELLULAR LOCATION</scope>
    <source>
        <strain>LAU 228</strain>
        <strain>LAU 556</strain>
    </source>
</reference>
<evidence type="ECO:0000250" key="1"/>
<evidence type="ECO:0000255" key="2"/>
<evidence type="ECO:0000255" key="3">
    <source>
        <dbReference type="PROSITE-ProRule" id="PRU10095"/>
    </source>
</evidence>
<evidence type="ECO:0000269" key="4">
    <source>
    </source>
</evidence>
<evidence type="ECO:0000305" key="5"/>
<accession>A1XIM1</accession>
<proteinExistence type="evidence at protein level"/>
<keyword id="KW-0325">Glycoprotein</keyword>
<keyword id="KW-0378">Hydrolase</keyword>
<keyword id="KW-0479">Metal-binding</keyword>
<keyword id="KW-0482">Metalloprotease</keyword>
<keyword id="KW-0645">Protease</keyword>
<keyword id="KW-0964">Secreted</keyword>
<keyword id="KW-0843">Virulence</keyword>
<keyword id="KW-0862">Zinc</keyword>
<keyword id="KW-0865">Zymogen</keyword>
<comment type="function">
    <text evidence="1">Secreted metalloproteinase probably acting as a virulence factor.</text>
</comment>
<comment type="cofactor">
    <cofactor evidence="1">
        <name>Zn(2+)</name>
        <dbReference type="ChEBI" id="CHEBI:29105"/>
    </cofactor>
    <text evidence="1">Binds 1 zinc ion per subunit.</text>
</comment>
<comment type="subcellular location">
    <subcellularLocation>
        <location evidence="4">Secreted</location>
    </subcellularLocation>
</comment>
<comment type="similarity">
    <text evidence="5">Belongs to the peptidase M36 family.</text>
</comment>